<protein>
    <recommendedName>
        <fullName evidence="1">Urease subunit beta</fullName>
        <ecNumber evidence="1">3.5.1.5</ecNumber>
    </recommendedName>
    <alternativeName>
        <fullName evidence="1">Urea amidohydrolase subunit beta</fullName>
    </alternativeName>
</protein>
<name>URE2_AGRFC</name>
<keyword id="KW-0963">Cytoplasm</keyword>
<keyword id="KW-0378">Hydrolase</keyword>
<keyword id="KW-1185">Reference proteome</keyword>
<organism>
    <name type="scientific">Agrobacterium fabrum (strain C58 / ATCC 33970)</name>
    <name type="common">Agrobacterium tumefaciens (strain C58)</name>
    <dbReference type="NCBI Taxonomy" id="176299"/>
    <lineage>
        <taxon>Bacteria</taxon>
        <taxon>Pseudomonadati</taxon>
        <taxon>Pseudomonadota</taxon>
        <taxon>Alphaproteobacteria</taxon>
        <taxon>Hyphomicrobiales</taxon>
        <taxon>Rhizobiaceae</taxon>
        <taxon>Rhizobium/Agrobacterium group</taxon>
        <taxon>Agrobacterium</taxon>
        <taxon>Agrobacterium tumefaciens complex</taxon>
    </lineage>
</organism>
<dbReference type="EC" id="3.5.1.5" evidence="1"/>
<dbReference type="EMBL" id="AE007869">
    <property type="protein sequence ID" value="AAL43393.1"/>
    <property type="molecule type" value="Genomic_DNA"/>
</dbReference>
<dbReference type="PIR" id="AC2872">
    <property type="entry name" value="AC2872"/>
</dbReference>
<dbReference type="RefSeq" id="NP_527507.1">
    <property type="nucleotide sequence ID" value="NC_003062.2"/>
</dbReference>
<dbReference type="RefSeq" id="WP_010972299.1">
    <property type="nucleotide sequence ID" value="NC_003062.2"/>
</dbReference>
<dbReference type="SMR" id="Q8UCS8"/>
<dbReference type="STRING" id="176299.Atu2405"/>
<dbReference type="EnsemblBacteria" id="AAL43393">
    <property type="protein sequence ID" value="AAL43393"/>
    <property type="gene ID" value="Atu2405"/>
</dbReference>
<dbReference type="GeneID" id="1134443"/>
<dbReference type="KEGG" id="atu:Atu2405"/>
<dbReference type="PATRIC" id="fig|176299.10.peg.2414"/>
<dbReference type="eggNOG" id="COG0832">
    <property type="taxonomic scope" value="Bacteria"/>
</dbReference>
<dbReference type="HOGENOM" id="CLU_129707_1_1_5"/>
<dbReference type="OrthoDB" id="9797217at2"/>
<dbReference type="PhylomeDB" id="Q8UCS8"/>
<dbReference type="BioCyc" id="AGRO:ATU2405-MONOMER"/>
<dbReference type="UniPathway" id="UPA00258">
    <property type="reaction ID" value="UER00370"/>
</dbReference>
<dbReference type="Proteomes" id="UP000000813">
    <property type="component" value="Chromosome circular"/>
</dbReference>
<dbReference type="GO" id="GO:0035550">
    <property type="term" value="C:urease complex"/>
    <property type="evidence" value="ECO:0007669"/>
    <property type="project" value="InterPro"/>
</dbReference>
<dbReference type="GO" id="GO:0009039">
    <property type="term" value="F:urease activity"/>
    <property type="evidence" value="ECO:0007669"/>
    <property type="project" value="UniProtKB-UniRule"/>
</dbReference>
<dbReference type="GO" id="GO:0043419">
    <property type="term" value="P:urea catabolic process"/>
    <property type="evidence" value="ECO:0007669"/>
    <property type="project" value="UniProtKB-UniRule"/>
</dbReference>
<dbReference type="CDD" id="cd00407">
    <property type="entry name" value="Urease_beta"/>
    <property type="match status" value="1"/>
</dbReference>
<dbReference type="FunFam" id="2.10.150.10:FF:000001">
    <property type="entry name" value="Urease subunit beta"/>
    <property type="match status" value="1"/>
</dbReference>
<dbReference type="Gene3D" id="2.10.150.10">
    <property type="entry name" value="Urease, beta subunit"/>
    <property type="match status" value="1"/>
</dbReference>
<dbReference type="HAMAP" id="MF_01954">
    <property type="entry name" value="Urease_beta"/>
    <property type="match status" value="1"/>
</dbReference>
<dbReference type="InterPro" id="IPR002019">
    <property type="entry name" value="Urease_beta-like"/>
</dbReference>
<dbReference type="InterPro" id="IPR036461">
    <property type="entry name" value="Urease_betasu_sf"/>
</dbReference>
<dbReference type="InterPro" id="IPR050069">
    <property type="entry name" value="Urease_subunit"/>
</dbReference>
<dbReference type="NCBIfam" id="NF009682">
    <property type="entry name" value="PRK13203.1"/>
    <property type="match status" value="1"/>
</dbReference>
<dbReference type="NCBIfam" id="TIGR00192">
    <property type="entry name" value="urease_beta"/>
    <property type="match status" value="1"/>
</dbReference>
<dbReference type="PANTHER" id="PTHR33569">
    <property type="entry name" value="UREASE"/>
    <property type="match status" value="1"/>
</dbReference>
<dbReference type="PANTHER" id="PTHR33569:SF1">
    <property type="entry name" value="UREASE"/>
    <property type="match status" value="1"/>
</dbReference>
<dbReference type="Pfam" id="PF00699">
    <property type="entry name" value="Urease_beta"/>
    <property type="match status" value="1"/>
</dbReference>
<dbReference type="SUPFAM" id="SSF51278">
    <property type="entry name" value="Urease, beta-subunit"/>
    <property type="match status" value="1"/>
</dbReference>
<reference key="1">
    <citation type="journal article" date="2001" name="Science">
        <title>The genome of the natural genetic engineer Agrobacterium tumefaciens C58.</title>
        <authorList>
            <person name="Wood D.W."/>
            <person name="Setubal J.C."/>
            <person name="Kaul R."/>
            <person name="Monks D.E."/>
            <person name="Kitajima J.P."/>
            <person name="Okura V.K."/>
            <person name="Zhou Y."/>
            <person name="Chen L."/>
            <person name="Wood G.E."/>
            <person name="Almeida N.F. Jr."/>
            <person name="Woo L."/>
            <person name="Chen Y."/>
            <person name="Paulsen I.T."/>
            <person name="Eisen J.A."/>
            <person name="Karp P.D."/>
            <person name="Bovee D. Sr."/>
            <person name="Chapman P."/>
            <person name="Clendenning J."/>
            <person name="Deatherage G."/>
            <person name="Gillet W."/>
            <person name="Grant C."/>
            <person name="Kutyavin T."/>
            <person name="Levy R."/>
            <person name="Li M.-J."/>
            <person name="McClelland E."/>
            <person name="Palmieri A."/>
            <person name="Raymond C."/>
            <person name="Rouse G."/>
            <person name="Saenphimmachak C."/>
            <person name="Wu Z."/>
            <person name="Romero P."/>
            <person name="Gordon D."/>
            <person name="Zhang S."/>
            <person name="Yoo H."/>
            <person name="Tao Y."/>
            <person name="Biddle P."/>
            <person name="Jung M."/>
            <person name="Krespan W."/>
            <person name="Perry M."/>
            <person name="Gordon-Kamm B."/>
            <person name="Liao L."/>
            <person name="Kim S."/>
            <person name="Hendrick C."/>
            <person name="Zhao Z.-Y."/>
            <person name="Dolan M."/>
            <person name="Chumley F."/>
            <person name="Tingey S.V."/>
            <person name="Tomb J.-F."/>
            <person name="Gordon M.P."/>
            <person name="Olson M.V."/>
            <person name="Nester E.W."/>
        </authorList>
    </citation>
    <scope>NUCLEOTIDE SEQUENCE [LARGE SCALE GENOMIC DNA]</scope>
    <source>
        <strain>C58 / ATCC 33970</strain>
    </source>
</reference>
<reference key="2">
    <citation type="journal article" date="2001" name="Science">
        <title>Genome sequence of the plant pathogen and biotechnology agent Agrobacterium tumefaciens C58.</title>
        <authorList>
            <person name="Goodner B."/>
            <person name="Hinkle G."/>
            <person name="Gattung S."/>
            <person name="Miller N."/>
            <person name="Blanchard M."/>
            <person name="Qurollo B."/>
            <person name="Goldman B.S."/>
            <person name="Cao Y."/>
            <person name="Askenazi M."/>
            <person name="Halling C."/>
            <person name="Mullin L."/>
            <person name="Houmiel K."/>
            <person name="Gordon J."/>
            <person name="Vaudin M."/>
            <person name="Iartchouk O."/>
            <person name="Epp A."/>
            <person name="Liu F."/>
            <person name="Wollam C."/>
            <person name="Allinger M."/>
            <person name="Doughty D."/>
            <person name="Scott C."/>
            <person name="Lappas C."/>
            <person name="Markelz B."/>
            <person name="Flanagan C."/>
            <person name="Crowell C."/>
            <person name="Gurson J."/>
            <person name="Lomo C."/>
            <person name="Sear C."/>
            <person name="Strub G."/>
            <person name="Cielo C."/>
            <person name="Slater S."/>
        </authorList>
    </citation>
    <scope>NUCLEOTIDE SEQUENCE [LARGE SCALE GENOMIC DNA]</scope>
    <source>
        <strain>C58 / ATCC 33970</strain>
    </source>
</reference>
<comment type="catalytic activity">
    <reaction evidence="1">
        <text>urea + 2 H2O + H(+) = hydrogencarbonate + 2 NH4(+)</text>
        <dbReference type="Rhea" id="RHEA:20557"/>
        <dbReference type="ChEBI" id="CHEBI:15377"/>
        <dbReference type="ChEBI" id="CHEBI:15378"/>
        <dbReference type="ChEBI" id="CHEBI:16199"/>
        <dbReference type="ChEBI" id="CHEBI:17544"/>
        <dbReference type="ChEBI" id="CHEBI:28938"/>
        <dbReference type="EC" id="3.5.1.5"/>
    </reaction>
</comment>
<comment type="pathway">
    <text evidence="1">Nitrogen metabolism; urea degradation; CO(2) and NH(3) from urea (urease route): step 1/1.</text>
</comment>
<comment type="subunit">
    <text evidence="1">Heterotrimer of UreA (gamma), UreB (beta) and UreC (alpha) subunits. Three heterotrimers associate to form the active enzyme.</text>
</comment>
<comment type="subcellular location">
    <subcellularLocation>
        <location evidence="1">Cytoplasm</location>
    </subcellularLocation>
</comment>
<comment type="similarity">
    <text evidence="1">Belongs to the urease beta subunit family.</text>
</comment>
<gene>
    <name evidence="1" type="primary">ureB</name>
    <name type="ordered locus">Atu2405</name>
    <name type="ORF">AGR_C_4363.1</name>
</gene>
<proteinExistence type="inferred from homology"/>
<accession>Q8UCS8</accession>
<sequence>MKPGEIIAAEGTIELNAGQPTVTIEVANSGDRPVQVGSHYHFFETNAGLLFDRDKARGMRLDIPAGTAVRFEPGQKREVTLVPLSGKREVYGFRQQIMGRL</sequence>
<evidence type="ECO:0000255" key="1">
    <source>
        <dbReference type="HAMAP-Rule" id="MF_01954"/>
    </source>
</evidence>
<feature type="chain" id="PRO_0000234223" description="Urease subunit beta">
    <location>
        <begin position="1"/>
        <end position="101"/>
    </location>
</feature>